<keyword id="KW-1185">Reference proteome</keyword>
<feature type="chain" id="PRO_0000283320" description="Putative F-box protein At1g47790">
    <location>
        <begin position="1"/>
        <end position="389"/>
    </location>
</feature>
<feature type="domain" description="F-box" evidence="1">
    <location>
        <begin position="19"/>
        <end position="65"/>
    </location>
</feature>
<name>FB44_ARATH</name>
<sequence>MEQQEKKKRKVYRRRRLQSKPTSSFPLDLASEILLRLPVKSVVRFRCVSKLWSSIITDPYFIKTYETQSSTRQSLLFCFKQSDKLFVFSIPKHHYDSNSSSQAAIDRFQVKLPQEFSYPSPTESVHGLICFHVLATVIVWNPSMRQFLTLPKPRKSWKELTVFLGYDPIEGKHKVVCLPRNRTCDECQVLTLGSAQKSWRTVKTKHKHRSTNDTWGRCIKGVVYYIAYVYHTRVWCIMSFHVKSEKFDMIKLPLENIYRDVMINYEGRLACVDKLYTLNNDGIRLWILEDAEKHKWSSKQFLARYVHNDLRTNTISKLTGVTHAGEFVYISTQYLKSFVLFCDPKKNRFRKVEFNGIVDEEFRLSNGVGRGRIYALYNFPNHCESLMSL</sequence>
<proteinExistence type="predicted"/>
<accession>Q9FZF8</accession>
<gene>
    <name type="ordered locus">At1g47790</name>
    <name type="ORF">T2E6.11</name>
</gene>
<dbReference type="EMBL" id="AC012463">
    <property type="protein sequence ID" value="AAF99789.1"/>
    <property type="molecule type" value="Genomic_DNA"/>
</dbReference>
<dbReference type="EMBL" id="CP002684">
    <property type="protein sequence ID" value="AEE32214.1"/>
    <property type="molecule type" value="Genomic_DNA"/>
</dbReference>
<dbReference type="RefSeq" id="NP_175213.1">
    <property type="nucleotide sequence ID" value="NM_103675.1"/>
</dbReference>
<dbReference type="SMR" id="Q9FZF8"/>
<dbReference type="FunCoup" id="Q9FZF8">
    <property type="interactions" value="32"/>
</dbReference>
<dbReference type="GlyGen" id="Q9FZF8">
    <property type="glycosylation" value="1 site"/>
</dbReference>
<dbReference type="iPTMnet" id="Q9FZF8"/>
<dbReference type="PaxDb" id="3702-AT1G47790.1"/>
<dbReference type="ProteomicsDB" id="222402"/>
<dbReference type="EnsemblPlants" id="AT1G47790.1">
    <property type="protein sequence ID" value="AT1G47790.1"/>
    <property type="gene ID" value="AT1G47790"/>
</dbReference>
<dbReference type="GeneID" id="841193"/>
<dbReference type="Gramene" id="AT1G47790.1">
    <property type="protein sequence ID" value="AT1G47790.1"/>
    <property type="gene ID" value="AT1G47790"/>
</dbReference>
<dbReference type="KEGG" id="ath:AT1G47790"/>
<dbReference type="Araport" id="AT1G47790"/>
<dbReference type="TAIR" id="AT1G47790"/>
<dbReference type="HOGENOM" id="CLU_027176_8_0_1"/>
<dbReference type="InParanoid" id="Q9FZF8"/>
<dbReference type="OMA" id="IITIGRC"/>
<dbReference type="PhylomeDB" id="Q9FZF8"/>
<dbReference type="PRO" id="PR:Q9FZF8"/>
<dbReference type="Proteomes" id="UP000006548">
    <property type="component" value="Chromosome 1"/>
</dbReference>
<dbReference type="ExpressionAtlas" id="Q9FZF8">
    <property type="expression patterns" value="differential"/>
</dbReference>
<dbReference type="CDD" id="cd22157">
    <property type="entry name" value="F-box_AtFBW1-like"/>
    <property type="match status" value="1"/>
</dbReference>
<dbReference type="Gene3D" id="1.20.1280.50">
    <property type="match status" value="1"/>
</dbReference>
<dbReference type="InterPro" id="IPR013187">
    <property type="entry name" value="F-box-assoc_dom_typ3"/>
</dbReference>
<dbReference type="InterPro" id="IPR017451">
    <property type="entry name" value="F-box-assoc_interact_dom"/>
</dbReference>
<dbReference type="InterPro" id="IPR036047">
    <property type="entry name" value="F-box-like_dom_sf"/>
</dbReference>
<dbReference type="InterPro" id="IPR001810">
    <property type="entry name" value="F-box_dom"/>
</dbReference>
<dbReference type="NCBIfam" id="TIGR01640">
    <property type="entry name" value="F_box_assoc_1"/>
    <property type="match status" value="1"/>
</dbReference>
<dbReference type="PANTHER" id="PTHR31111">
    <property type="entry name" value="BNAA05G37150D PROTEIN-RELATED"/>
    <property type="match status" value="1"/>
</dbReference>
<dbReference type="PANTHER" id="PTHR31111:SF119">
    <property type="entry name" value="F-BOX DOMAIN-CONTAINING PROTEIN"/>
    <property type="match status" value="1"/>
</dbReference>
<dbReference type="Pfam" id="PF00646">
    <property type="entry name" value="F-box"/>
    <property type="match status" value="1"/>
</dbReference>
<dbReference type="Pfam" id="PF08268">
    <property type="entry name" value="FBA_3"/>
    <property type="match status" value="1"/>
</dbReference>
<dbReference type="SMART" id="SM00256">
    <property type="entry name" value="FBOX"/>
    <property type="match status" value="1"/>
</dbReference>
<dbReference type="SUPFAM" id="SSF81383">
    <property type="entry name" value="F-box domain"/>
    <property type="match status" value="1"/>
</dbReference>
<dbReference type="PROSITE" id="PS50181">
    <property type="entry name" value="FBOX"/>
    <property type="match status" value="1"/>
</dbReference>
<organism>
    <name type="scientific">Arabidopsis thaliana</name>
    <name type="common">Mouse-ear cress</name>
    <dbReference type="NCBI Taxonomy" id="3702"/>
    <lineage>
        <taxon>Eukaryota</taxon>
        <taxon>Viridiplantae</taxon>
        <taxon>Streptophyta</taxon>
        <taxon>Embryophyta</taxon>
        <taxon>Tracheophyta</taxon>
        <taxon>Spermatophyta</taxon>
        <taxon>Magnoliopsida</taxon>
        <taxon>eudicotyledons</taxon>
        <taxon>Gunneridae</taxon>
        <taxon>Pentapetalae</taxon>
        <taxon>rosids</taxon>
        <taxon>malvids</taxon>
        <taxon>Brassicales</taxon>
        <taxon>Brassicaceae</taxon>
        <taxon>Camelineae</taxon>
        <taxon>Arabidopsis</taxon>
    </lineage>
</organism>
<evidence type="ECO:0000255" key="1">
    <source>
        <dbReference type="PROSITE-ProRule" id="PRU00080"/>
    </source>
</evidence>
<reference key="1">
    <citation type="journal article" date="2000" name="Nature">
        <title>Sequence and analysis of chromosome 1 of the plant Arabidopsis thaliana.</title>
        <authorList>
            <person name="Theologis A."/>
            <person name="Ecker J.R."/>
            <person name="Palm C.J."/>
            <person name="Federspiel N.A."/>
            <person name="Kaul S."/>
            <person name="White O."/>
            <person name="Alonso J."/>
            <person name="Altafi H."/>
            <person name="Araujo R."/>
            <person name="Bowman C.L."/>
            <person name="Brooks S.Y."/>
            <person name="Buehler E."/>
            <person name="Chan A."/>
            <person name="Chao Q."/>
            <person name="Chen H."/>
            <person name="Cheuk R.F."/>
            <person name="Chin C.W."/>
            <person name="Chung M.K."/>
            <person name="Conn L."/>
            <person name="Conway A.B."/>
            <person name="Conway A.R."/>
            <person name="Creasy T.H."/>
            <person name="Dewar K."/>
            <person name="Dunn P."/>
            <person name="Etgu P."/>
            <person name="Feldblyum T.V."/>
            <person name="Feng J.-D."/>
            <person name="Fong B."/>
            <person name="Fujii C.Y."/>
            <person name="Gill J.E."/>
            <person name="Goldsmith A.D."/>
            <person name="Haas B."/>
            <person name="Hansen N.F."/>
            <person name="Hughes B."/>
            <person name="Huizar L."/>
            <person name="Hunter J.L."/>
            <person name="Jenkins J."/>
            <person name="Johnson-Hopson C."/>
            <person name="Khan S."/>
            <person name="Khaykin E."/>
            <person name="Kim C.J."/>
            <person name="Koo H.L."/>
            <person name="Kremenetskaia I."/>
            <person name="Kurtz D.B."/>
            <person name="Kwan A."/>
            <person name="Lam B."/>
            <person name="Langin-Hooper S."/>
            <person name="Lee A."/>
            <person name="Lee J.M."/>
            <person name="Lenz C.A."/>
            <person name="Li J.H."/>
            <person name="Li Y.-P."/>
            <person name="Lin X."/>
            <person name="Liu S.X."/>
            <person name="Liu Z.A."/>
            <person name="Luros J.S."/>
            <person name="Maiti R."/>
            <person name="Marziali A."/>
            <person name="Militscher J."/>
            <person name="Miranda M."/>
            <person name="Nguyen M."/>
            <person name="Nierman W.C."/>
            <person name="Osborne B.I."/>
            <person name="Pai G."/>
            <person name="Peterson J."/>
            <person name="Pham P.K."/>
            <person name="Rizzo M."/>
            <person name="Rooney T."/>
            <person name="Rowley D."/>
            <person name="Sakano H."/>
            <person name="Salzberg S.L."/>
            <person name="Schwartz J.R."/>
            <person name="Shinn P."/>
            <person name="Southwick A.M."/>
            <person name="Sun H."/>
            <person name="Tallon L.J."/>
            <person name="Tambunga G."/>
            <person name="Toriumi M.J."/>
            <person name="Town C.D."/>
            <person name="Utterback T."/>
            <person name="Van Aken S."/>
            <person name="Vaysberg M."/>
            <person name="Vysotskaia V.S."/>
            <person name="Walker M."/>
            <person name="Wu D."/>
            <person name="Yu G."/>
            <person name="Fraser C.M."/>
            <person name="Venter J.C."/>
            <person name="Davis R.W."/>
        </authorList>
    </citation>
    <scope>NUCLEOTIDE SEQUENCE [LARGE SCALE GENOMIC DNA]</scope>
    <source>
        <strain>cv. Columbia</strain>
    </source>
</reference>
<reference key="2">
    <citation type="journal article" date="2017" name="Plant J.">
        <title>Araport11: a complete reannotation of the Arabidopsis thaliana reference genome.</title>
        <authorList>
            <person name="Cheng C.Y."/>
            <person name="Krishnakumar V."/>
            <person name="Chan A.P."/>
            <person name="Thibaud-Nissen F."/>
            <person name="Schobel S."/>
            <person name="Town C.D."/>
        </authorList>
    </citation>
    <scope>GENOME REANNOTATION</scope>
    <source>
        <strain>cv. Columbia</strain>
    </source>
</reference>
<protein>
    <recommendedName>
        <fullName>Putative F-box protein At1g47790</fullName>
    </recommendedName>
</protein>